<protein>
    <recommendedName>
        <fullName evidence="1">Regulatory protein RecX</fullName>
    </recommendedName>
</protein>
<proteinExistence type="inferred from homology"/>
<comment type="function">
    <text evidence="1">Modulates RecA activity.</text>
</comment>
<comment type="subcellular location">
    <subcellularLocation>
        <location evidence="1">Cytoplasm</location>
    </subcellularLocation>
</comment>
<comment type="similarity">
    <text evidence="1">Belongs to the RecX family.</text>
</comment>
<sequence length="271" mass="31689">MPIITKISTQKRKGRYNIFIDNEYAFSVSERTLAERRLLKGTELSNEDIEEIKKAEADSHAIQLAMSYLSYQPRSVYEVLEYLNKHEISQDASQAAVQNLIELNYLNDNNFARLFIKNNLRVGKDGPRTVDRKLKQKGLAADIIQEALYEIEDEEWVDAGLRVVHSLIHQAGKLSYKEIKQKAWTKLRAHGFDQELSELVLEKLDLEKDEDEQIEALKKQGSKAWRRYRKDEDFKRKQKVKRYLFQHGFSSGEIDSFLNGEIVDLEEIDEY</sequence>
<name>RECX_LACGA</name>
<organism>
    <name type="scientific">Lactobacillus gasseri (strain ATCC 33323 / DSM 20243 / BCRC 14619 / CIP 102991 / JCM 1131 / KCTC 3163 / NCIMB 11718 / NCTC 13722 / AM63)</name>
    <dbReference type="NCBI Taxonomy" id="324831"/>
    <lineage>
        <taxon>Bacteria</taxon>
        <taxon>Bacillati</taxon>
        <taxon>Bacillota</taxon>
        <taxon>Bacilli</taxon>
        <taxon>Lactobacillales</taxon>
        <taxon>Lactobacillaceae</taxon>
        <taxon>Lactobacillus</taxon>
    </lineage>
</organism>
<dbReference type="EMBL" id="CP000413">
    <property type="protein sequence ID" value="ABJ60732.1"/>
    <property type="molecule type" value="Genomic_DNA"/>
</dbReference>
<dbReference type="RefSeq" id="WP_003646952.1">
    <property type="nucleotide sequence ID" value="NZ_WBMG01000003.1"/>
</dbReference>
<dbReference type="SMR" id="Q041Z0"/>
<dbReference type="GeneID" id="29639011"/>
<dbReference type="KEGG" id="lga:LGAS_1370"/>
<dbReference type="HOGENOM" id="CLU_066607_4_0_9"/>
<dbReference type="BioCyc" id="LGAS324831:G1G6Y-1364-MONOMER"/>
<dbReference type="Proteomes" id="UP000000664">
    <property type="component" value="Chromosome"/>
</dbReference>
<dbReference type="GO" id="GO:0005737">
    <property type="term" value="C:cytoplasm"/>
    <property type="evidence" value="ECO:0007669"/>
    <property type="project" value="UniProtKB-SubCell"/>
</dbReference>
<dbReference type="GO" id="GO:0006282">
    <property type="term" value="P:regulation of DNA repair"/>
    <property type="evidence" value="ECO:0007669"/>
    <property type="project" value="UniProtKB-UniRule"/>
</dbReference>
<dbReference type="Gene3D" id="1.10.10.10">
    <property type="entry name" value="Winged helix-like DNA-binding domain superfamily/Winged helix DNA-binding domain"/>
    <property type="match status" value="4"/>
</dbReference>
<dbReference type="HAMAP" id="MF_01114">
    <property type="entry name" value="RecX"/>
    <property type="match status" value="1"/>
</dbReference>
<dbReference type="InterPro" id="IPR053926">
    <property type="entry name" value="RecX_HTH_1st"/>
</dbReference>
<dbReference type="InterPro" id="IPR053924">
    <property type="entry name" value="RecX_HTH_2nd"/>
</dbReference>
<dbReference type="InterPro" id="IPR053925">
    <property type="entry name" value="RecX_HTH_3rd"/>
</dbReference>
<dbReference type="InterPro" id="IPR003783">
    <property type="entry name" value="Regulatory_RecX"/>
</dbReference>
<dbReference type="InterPro" id="IPR036388">
    <property type="entry name" value="WH-like_DNA-bd_sf"/>
</dbReference>
<dbReference type="NCBIfam" id="NF010733">
    <property type="entry name" value="PRK14135.1"/>
    <property type="match status" value="1"/>
</dbReference>
<dbReference type="PANTHER" id="PTHR33602">
    <property type="entry name" value="REGULATORY PROTEIN RECX FAMILY PROTEIN"/>
    <property type="match status" value="1"/>
</dbReference>
<dbReference type="PANTHER" id="PTHR33602:SF1">
    <property type="entry name" value="REGULATORY PROTEIN RECX FAMILY PROTEIN"/>
    <property type="match status" value="1"/>
</dbReference>
<dbReference type="Pfam" id="PF21982">
    <property type="entry name" value="RecX_HTH1"/>
    <property type="match status" value="1"/>
</dbReference>
<dbReference type="Pfam" id="PF02631">
    <property type="entry name" value="RecX_HTH2"/>
    <property type="match status" value="1"/>
</dbReference>
<dbReference type="Pfam" id="PF21981">
    <property type="entry name" value="RecX_HTH3"/>
    <property type="match status" value="1"/>
</dbReference>
<evidence type="ECO:0000255" key="1">
    <source>
        <dbReference type="HAMAP-Rule" id="MF_01114"/>
    </source>
</evidence>
<reference key="1">
    <citation type="journal article" date="2006" name="Proc. Natl. Acad. Sci. U.S.A.">
        <title>Comparative genomics of the lactic acid bacteria.</title>
        <authorList>
            <person name="Makarova K.S."/>
            <person name="Slesarev A."/>
            <person name="Wolf Y.I."/>
            <person name="Sorokin A."/>
            <person name="Mirkin B."/>
            <person name="Koonin E.V."/>
            <person name="Pavlov A."/>
            <person name="Pavlova N."/>
            <person name="Karamychev V."/>
            <person name="Polouchine N."/>
            <person name="Shakhova V."/>
            <person name="Grigoriev I."/>
            <person name="Lou Y."/>
            <person name="Rohksar D."/>
            <person name="Lucas S."/>
            <person name="Huang K."/>
            <person name="Goodstein D.M."/>
            <person name="Hawkins T."/>
            <person name="Plengvidhya V."/>
            <person name="Welker D."/>
            <person name="Hughes J."/>
            <person name="Goh Y."/>
            <person name="Benson A."/>
            <person name="Baldwin K."/>
            <person name="Lee J.-H."/>
            <person name="Diaz-Muniz I."/>
            <person name="Dosti B."/>
            <person name="Smeianov V."/>
            <person name="Wechter W."/>
            <person name="Barabote R."/>
            <person name="Lorca G."/>
            <person name="Altermann E."/>
            <person name="Barrangou R."/>
            <person name="Ganesan B."/>
            <person name="Xie Y."/>
            <person name="Rawsthorne H."/>
            <person name="Tamir D."/>
            <person name="Parker C."/>
            <person name="Breidt F."/>
            <person name="Broadbent J.R."/>
            <person name="Hutkins R."/>
            <person name="O'Sullivan D."/>
            <person name="Steele J."/>
            <person name="Unlu G."/>
            <person name="Saier M.H. Jr."/>
            <person name="Klaenhammer T."/>
            <person name="Richardson P."/>
            <person name="Kozyavkin S."/>
            <person name="Weimer B.C."/>
            <person name="Mills D.A."/>
        </authorList>
    </citation>
    <scope>NUCLEOTIDE SEQUENCE [LARGE SCALE GENOMIC DNA]</scope>
    <source>
        <strain>ATCC 33323 / DSM 20243 / BCRC 14619 / CIP 102991 / JCM 1131 / KCTC 3163 / NCIMB 11718 / NCTC 13722 / AM63</strain>
    </source>
</reference>
<feature type="chain" id="PRO_1000065181" description="Regulatory protein RecX">
    <location>
        <begin position="1"/>
        <end position="271"/>
    </location>
</feature>
<accession>Q041Z0</accession>
<gene>
    <name evidence="1" type="primary">recX</name>
    <name type="ordered locus">LGAS_1370</name>
</gene>
<keyword id="KW-0963">Cytoplasm</keyword>